<feature type="chain" id="PRO_0000244858" description="Protein Tat">
    <location>
        <begin position="1"/>
        <end position="101"/>
    </location>
</feature>
<feature type="region of interest" description="Transactivation" evidence="1">
    <location>
        <begin position="1"/>
        <end position="48"/>
    </location>
</feature>
<feature type="region of interest" description="Interaction with human CREBBP" evidence="1">
    <location>
        <begin position="1"/>
        <end position="24"/>
    </location>
</feature>
<feature type="region of interest" description="Cysteine-rich" evidence="1">
    <location>
        <begin position="22"/>
        <end position="37"/>
    </location>
</feature>
<feature type="region of interest" description="Core" evidence="1">
    <location>
        <begin position="38"/>
        <end position="48"/>
    </location>
</feature>
<feature type="region of interest" description="Disordered" evidence="2">
    <location>
        <begin position="48"/>
        <end position="101"/>
    </location>
</feature>
<feature type="region of interest" description="Interaction with the host capping enzyme RNGTT" evidence="1">
    <location>
        <begin position="49"/>
        <end position="86"/>
    </location>
</feature>
<feature type="short sequence motif" description="Nuclear localization signal, RNA-binding (TAR), and protein transduction" evidence="1">
    <location>
        <begin position="49"/>
        <end position="57"/>
    </location>
</feature>
<feature type="short sequence motif" description="Cell attachment site" evidence="1">
    <location>
        <begin position="78"/>
        <end position="80"/>
    </location>
</feature>
<feature type="compositionally biased region" description="Basic residues" evidence="2">
    <location>
        <begin position="48"/>
        <end position="58"/>
    </location>
</feature>
<feature type="compositionally biased region" description="Polar residues" evidence="2">
    <location>
        <begin position="59"/>
        <end position="75"/>
    </location>
</feature>
<feature type="compositionally biased region" description="Basic and acidic residues" evidence="2">
    <location>
        <begin position="83"/>
        <end position="101"/>
    </location>
</feature>
<feature type="binding site" evidence="1">
    <location>
        <position position="22"/>
    </location>
    <ligand>
        <name>Zn(2+)</name>
        <dbReference type="ChEBI" id="CHEBI:29105"/>
        <label>1</label>
    </ligand>
</feature>
<feature type="binding site" evidence="1">
    <location>
        <position position="25"/>
    </location>
    <ligand>
        <name>Zn(2+)</name>
        <dbReference type="ChEBI" id="CHEBI:29105"/>
        <label>2</label>
    </ligand>
</feature>
<feature type="binding site" evidence="1">
    <location>
        <position position="27"/>
    </location>
    <ligand>
        <name>Zn(2+)</name>
        <dbReference type="ChEBI" id="CHEBI:29105"/>
        <label>2</label>
    </ligand>
</feature>
<feature type="binding site" evidence="1">
    <location>
        <position position="30"/>
    </location>
    <ligand>
        <name>Zn(2+)</name>
        <dbReference type="ChEBI" id="CHEBI:29105"/>
        <label>2</label>
    </ligand>
</feature>
<feature type="binding site" evidence="1">
    <location>
        <position position="33"/>
    </location>
    <ligand>
        <name>Zn(2+)</name>
        <dbReference type="ChEBI" id="CHEBI:29105"/>
        <label>1</label>
    </ligand>
</feature>
<feature type="binding site" evidence="1">
    <location>
        <position position="34"/>
    </location>
    <ligand>
        <name>Zn(2+)</name>
        <dbReference type="ChEBI" id="CHEBI:29105"/>
        <label>1</label>
    </ligand>
</feature>
<feature type="binding site" evidence="1">
    <location>
        <position position="37"/>
    </location>
    <ligand>
        <name>Zn(2+)</name>
        <dbReference type="ChEBI" id="CHEBI:29105"/>
        <label>1</label>
    </ligand>
</feature>
<feature type="site" description="Essential for Tat translocation through the endosomal membrane" evidence="1">
    <location>
        <position position="11"/>
    </location>
</feature>
<feature type="modified residue" description="N6-acetyllysine; by host PCAF" evidence="1">
    <location>
        <position position="28"/>
    </location>
</feature>
<feature type="modified residue" description="N6-acetyllysine; by host EP300 and GCN5L2" evidence="1">
    <location>
        <position position="50"/>
    </location>
</feature>
<feature type="modified residue" description="N6-acetyllysine; by host EP300 and GCN5L2" evidence="1">
    <location>
        <position position="51"/>
    </location>
</feature>
<feature type="modified residue" description="Asymmetric dimethylarginine; by host PRMT6" evidence="1">
    <location>
        <position position="52"/>
    </location>
</feature>
<feature type="modified residue" description="Asymmetric dimethylarginine; by host PRMT6" evidence="1">
    <location>
        <position position="53"/>
    </location>
</feature>
<feature type="cross-link" description="Glycyl lysine isopeptide (Lys-Gly) (interchain with G-Cter in ubiquitin)" evidence="1">
    <location>
        <position position="71"/>
    </location>
</feature>
<feature type="splice variant" id="VSP_022430" description="In isoform Short.">
    <location>
        <begin position="73"/>
        <end position="101"/>
    </location>
</feature>
<gene>
    <name evidence="1" type="primary">tat</name>
</gene>
<sequence>MEPVDPSLDPWNHPGSQPTTPCTKCYCKRCCFHCQWCFTTKGLGISYGRKKRRQRHRTPQSSQVHQNSLPKQPLSQARGDPTGPKESKKEVESKAKTDPCA</sequence>
<organism>
    <name type="scientific">Human immunodeficiency virus type 1 group M subtype F1 (isolate VI850)</name>
    <name type="common">HIV-1</name>
    <dbReference type="NCBI Taxonomy" id="388813"/>
    <lineage>
        <taxon>Viruses</taxon>
        <taxon>Riboviria</taxon>
        <taxon>Pararnavirae</taxon>
        <taxon>Artverviricota</taxon>
        <taxon>Revtraviricetes</taxon>
        <taxon>Ortervirales</taxon>
        <taxon>Retroviridae</taxon>
        <taxon>Orthoretrovirinae</taxon>
        <taxon>Lentivirus</taxon>
        <taxon>Human immunodeficiency virus type 1</taxon>
    </lineage>
</organism>
<name>TAT_HV1VI</name>
<comment type="function">
    <text evidence="1">Transcriptional activator that increases RNA Pol II processivity, thereby increasing the level of full-length viral transcripts. Recognizes a hairpin structure at the 5'-LTR of the nascent viral mRNAs referred to as the transactivation responsive RNA element (TAR) and recruits the cyclin T1-CDK9 complex (P-TEFb complex) that will in turn hyperphosphorylate the RNA polymerase II to allow efficient elongation. The CDK9 component of P-TEFb and other Tat-activated kinases hyperphosphorylate the C-terminus of RNA Pol II that becomes stabilized and much more processive. Other factors such as HTATSF1/Tat-SF1, SUPT5H/SPT5, and HTATIP2 are also important for Tat's function. Besides its effect on RNA Pol II processivity, Tat induces chromatin remodeling of proviral genes by recruiting the histone acetyltransferases (HATs) CREBBP, EP300 and PCAF to the chromatin. This also contributes to the increase in proviral transcription rate, especially when the provirus integrates in transcriptionally silent region of the host genome. To ensure maximal activation of the LTR, Tat mediates nuclear translocation of NF-kappa-B by interacting with host RELA. Through its interaction with host TBP, Tat may also modulate transcription initiation. Tat can reactivate a latently infected cell by penetrating in it and transactivating its LTR promoter. In the cytoplasm, Tat is thought to act as a translational activator of HIV-1 mRNAs.</text>
</comment>
<comment type="function">
    <text evidence="1">Extracellular circulating Tat can be endocytosed by surrounding uninfected cells via the binding to several surface receptors such as CD26, CXCR4, heparan sulfate proteoglycans (HSPG) or LDLR. Neurons are rarely infected, but they internalize Tat via their LDLR. Through its interaction with nuclear HATs, Tat is potentially able to control the acetylation-dependent cellular gene expression. Modulates the expression of many cellular genes involved in cell survival, proliferation or in coding for cytokines or cytokine receptors. Tat plays a role in T-cell and neurons apoptosis. Tat induced neurotoxicity and apoptosis probably contribute to neuroAIDS. Circulating Tat also acts as a chemokine-like and/or growth factor-like molecule that binds to specific receptors on the surface of the cells, affecting many cellular pathways. In the vascular system, Tat binds to ITGAV/ITGB3 and ITGA5/ITGB1 integrins dimers at the surface of endothelial cells and competes with bFGF for heparin-binding sites, leading to an excess of soluble bFGF.</text>
</comment>
<comment type="subunit">
    <text evidence="1">Interacts with host CCNT1. Associates with the P-TEFb complex composed at least of Tat, P-TEFb (CDK9 and CCNT1), TAR RNA, RNA Pol II. Recruits the HATs CREBBP, TAF1/TFIID, EP300, PCAF and GCN5L2. Interacts with host KAT5/Tip60; this interaction targets the latter to degradation. Interacts with the host deacetylase SIRT1. Interacts with host capping enzyme RNGTT; this interaction stimulates RNGTT. Binds to host KDR, and to the host integrins ITGAV/ITGB3 and ITGA5/ITGB1. Interacts with host KPNB1/importin beta-1 without previous binding to KPNA1/importin alpha-1. Interacts with EIF2AK2. Interacts with host nucleosome assembly protein NAP1L1; this interaction may be required for the transport of Tat within the nucleus, since the two proteins interact at the nuclear rim. Interacts with host C1QBP/SF2P32; this interaction involves lysine-acetylated Tat. Interacts with the host chemokine receptors CCR2, CCR3 and CXCR4. Interacts with host DPP4/CD26; this interaction may trigger an anti-proliferative effect. Interacts with host LDLR. Interacts with the host extracellular matrix metalloproteinase MMP1. Interacts with host PRMT6; this interaction mediates Tat's methylation. Interacts with, and is ubiquitinated by MDM2/Hdm2. Interacts with host PSMC3 and HTATIP2. Interacts with STAB1; this interaction may overcome SATB1-mediated repression of IL2 and IL2RA (interleukin) in T cells by binding to the same domain than HDAC1. Interacts (when acetylated) with human CDK13, thereby increasing HIV-1 mRNA splicing and promoting the production of the doubly spliced HIV-1 protein Nef. Interacts with host TBP; this interaction modulates the activity of transcriptional pre-initiation complex. Interacts with host RELA. Interacts with host PLSCR1; this interaction negatively regulates Tat transactivation activity by altering its subcellular distribution.</text>
</comment>
<comment type="subcellular location">
    <subcellularLocation>
        <location evidence="1">Host nucleus</location>
        <location evidence="1">Host nucleolus</location>
    </subcellularLocation>
    <subcellularLocation>
        <location evidence="1">Host cytoplasm</location>
    </subcellularLocation>
    <subcellularLocation>
        <location evidence="1">Secreted</location>
    </subcellularLocation>
    <text evidence="1">Probably localizes to both nuclear and nucleolar compartments. Nuclear localization is mediated through the interaction of the nuclear localization signal with importin KPNB1. Secretion occurs through a Golgi-independent pathway. Tat is released from infected cells to the extracellular space where it remains associated to the cell membrane, or is secreted into the cerebrospinal fluid and sera. Extracellular Tat can be endocytosed by surrounding uninfected cells via binding to several receptors depending on the cell type.</text>
</comment>
<comment type="alternative products">
    <event type="alternative splicing"/>
    <isoform>
        <id>Q9QSR0-1</id>
        <name>Long</name>
        <sequence type="displayed"/>
    </isoform>
    <isoform>
        <id>Q9QSR0-2</id>
        <name>Short</name>
        <sequence type="described" ref="VSP_022430"/>
    </isoform>
</comment>
<comment type="domain">
    <text evidence="1">The cell attachment site mediates the interaction with ITGAV/ITGB3 and ITGA5/ITGB1 integrins, leading to vascular cell migration and invasion. This interaction also provides endothelial cells with the adhesion signal they require to grow in response to mitogens.</text>
</comment>
<comment type="domain">
    <text evidence="1">The Cys-rich region may bind 2 zinc ions. This region is involved in binding to KAT5.</text>
</comment>
<comment type="domain">
    <text evidence="1">The transactivation domain mediates the interaction with CCNT1, GCN5L2, and MDM2.</text>
</comment>
<comment type="domain">
    <text evidence="1">The Arg-rich RNA-binding region binds the TAR RNA. This region also mediates the nuclear localization through direct binding to KPNB1 and is involved in Tat's transfer across cell membranes (protein transduction). The same region is required for the interaction with EP300, PCAF, EIF2AK2 and KDR.</text>
</comment>
<comment type="PTM">
    <text evidence="1">Asymmetrical arginine methylation by host PRMT6 seems to diminish the transactivation capacity of Tat and affects the interaction with host CCNT1.</text>
</comment>
<comment type="PTM">
    <text evidence="1">Acetylation by EP300, CREBBP, GCN5L2/GCN5 and PCAF regulates the transactivation activity of Tat. EP300-mediated acetylation of Lys-50 promotes dissociation of Tat from the TAR RNA through the competitive binding to PCAF's bromodomain. In addition, the non-acetylated Tat's N-terminus can also interact with PCAF. PCAF-mediated acetylation of Lys-28 enhances Tat's binding to CCNT1. Lys-50 is deacetylated by SIRT1.</text>
</comment>
<comment type="PTM">
    <text evidence="1">Polyubiquitination by host MDM2 does not target Tat to degradation, but activates its transactivation function and fosters interaction with CCNT1 and TAR RNA.</text>
</comment>
<comment type="PTM">
    <text evidence="1">Phosphorylated by EIF2AK2 on serine and threonine residues adjacent to the basic region important for TAR RNA binding and function. Phosphorylation of Tat by EIF2AK2 is dependent on the prior activation of EIF2AK2 by dsRNA.</text>
</comment>
<comment type="miscellaneous">
    <text evidence="1">HIV-1 lineages are divided in three main groups, M (for Major), O (for Outlier), and N (for New, or Non-M, Non-O). The vast majority of strains found worldwide belong to the group M. Group O seems to be endemic to and largely confined to Cameroon and neighboring countries in West Central Africa, where these viruses represent a small minority of HIV-1 strains. The group N is represented by a limited number of isolates from Cameroonian persons. The group M is further subdivided in 9 clades or subtypes (A to D, F to H, J and K).</text>
</comment>
<comment type="miscellaneous">
    <molecule>Isoform Short</molecule>
    <text evidence="3">Expressed in the late stage of the infection cycle, when unspliced viral RNAs are exported to the cytoplasm by the viral Rev protein.</text>
</comment>
<comment type="similarity">
    <text evidence="1">Belongs to the lentiviruses Tat family.</text>
</comment>
<accession>Q9QSR0</accession>
<proteinExistence type="inferred from homology"/>
<dbReference type="EMBL" id="AF077336">
    <property type="protein sequence ID" value="AAD46091.1"/>
    <property type="molecule type" value="Genomic_DNA"/>
</dbReference>
<dbReference type="SMR" id="Q9QSR0"/>
<dbReference type="Proteomes" id="UP000007418">
    <property type="component" value="Segment"/>
</dbReference>
<dbReference type="GO" id="GO:0005576">
    <property type="term" value="C:extracellular region"/>
    <property type="evidence" value="ECO:0007669"/>
    <property type="project" value="UniProtKB-SubCell"/>
</dbReference>
<dbReference type="GO" id="GO:0030430">
    <property type="term" value="C:host cell cytoplasm"/>
    <property type="evidence" value="ECO:0007669"/>
    <property type="project" value="UniProtKB-SubCell"/>
</dbReference>
<dbReference type="GO" id="GO:0044196">
    <property type="term" value="C:host cell nucleolus"/>
    <property type="evidence" value="ECO:0007669"/>
    <property type="project" value="UniProtKB-SubCell"/>
</dbReference>
<dbReference type="GO" id="GO:0042805">
    <property type="term" value="F:actinin binding"/>
    <property type="evidence" value="ECO:0007669"/>
    <property type="project" value="UniProtKB-UniRule"/>
</dbReference>
<dbReference type="GO" id="GO:0030332">
    <property type="term" value="F:cyclin binding"/>
    <property type="evidence" value="ECO:0007669"/>
    <property type="project" value="UniProtKB-UniRule"/>
</dbReference>
<dbReference type="GO" id="GO:0046872">
    <property type="term" value="F:metal ion binding"/>
    <property type="evidence" value="ECO:0007669"/>
    <property type="project" value="UniProtKB-UniRule"/>
</dbReference>
<dbReference type="GO" id="GO:0019904">
    <property type="term" value="F:protein domain specific binding"/>
    <property type="evidence" value="ECO:0007669"/>
    <property type="project" value="UniProtKB-UniRule"/>
</dbReference>
<dbReference type="GO" id="GO:0004865">
    <property type="term" value="F:protein serine/threonine phosphatase inhibitor activity"/>
    <property type="evidence" value="ECO:0007669"/>
    <property type="project" value="UniProtKB-KW"/>
</dbReference>
<dbReference type="GO" id="GO:0001070">
    <property type="term" value="F:RNA-binding transcription regulator activity"/>
    <property type="evidence" value="ECO:0007669"/>
    <property type="project" value="UniProtKB-UniRule"/>
</dbReference>
<dbReference type="GO" id="GO:1990970">
    <property type="term" value="F:trans-activation response element binding"/>
    <property type="evidence" value="ECO:0007669"/>
    <property type="project" value="UniProtKB-UniRule"/>
</dbReference>
<dbReference type="GO" id="GO:0006351">
    <property type="term" value="P:DNA-templated transcription"/>
    <property type="evidence" value="ECO:0007669"/>
    <property type="project" value="UniProtKB-UniRule"/>
</dbReference>
<dbReference type="GO" id="GO:0032968">
    <property type="term" value="P:positive regulation of transcription elongation by RNA polymerase II"/>
    <property type="evidence" value="ECO:0007669"/>
    <property type="project" value="UniProtKB-UniRule"/>
</dbReference>
<dbReference type="GO" id="GO:0050434">
    <property type="term" value="P:positive regulation of viral transcription"/>
    <property type="evidence" value="ECO:0007669"/>
    <property type="project" value="UniProtKB-UniRule"/>
</dbReference>
<dbReference type="GO" id="GO:0039525">
    <property type="term" value="P:symbiont-mediated perturbation of host chromatin organization"/>
    <property type="evidence" value="ECO:0007669"/>
    <property type="project" value="UniProtKB-UniRule"/>
</dbReference>
<dbReference type="GO" id="GO:0052170">
    <property type="term" value="P:symbiont-mediated suppression of host innate immune response"/>
    <property type="evidence" value="ECO:0007669"/>
    <property type="project" value="UniProtKB-KW"/>
</dbReference>
<dbReference type="GO" id="GO:0039606">
    <property type="term" value="P:symbiont-mediated suppression of host translation initiation"/>
    <property type="evidence" value="ECO:0007669"/>
    <property type="project" value="UniProtKB-KW"/>
</dbReference>
<dbReference type="GO" id="GO:0039502">
    <property type="term" value="P:symbiont-mediated suppression of host type I interferon-mediated signaling pathway"/>
    <property type="evidence" value="ECO:0007669"/>
    <property type="project" value="UniProtKB-UniRule"/>
</dbReference>
<dbReference type="Gene3D" id="4.10.20.10">
    <property type="entry name" value="Tat domain"/>
    <property type="match status" value="1"/>
</dbReference>
<dbReference type="HAMAP" id="MF_04079">
    <property type="entry name" value="HIV_TAT"/>
    <property type="match status" value="1"/>
</dbReference>
<dbReference type="InterPro" id="IPR001831">
    <property type="entry name" value="IV_Tat"/>
</dbReference>
<dbReference type="InterPro" id="IPR036963">
    <property type="entry name" value="Tat_dom_sf"/>
</dbReference>
<dbReference type="Pfam" id="PF00539">
    <property type="entry name" value="Tat"/>
    <property type="match status" value="1"/>
</dbReference>
<dbReference type="PRINTS" id="PR00055">
    <property type="entry name" value="HIVTATDOMAIN"/>
</dbReference>
<protein>
    <recommendedName>
        <fullName evidence="1">Protein Tat</fullName>
    </recommendedName>
    <alternativeName>
        <fullName evidence="1">Transactivating regulatory protein</fullName>
    </alternativeName>
</protein>
<organismHost>
    <name type="scientific">Homo sapiens</name>
    <name type="common">Human</name>
    <dbReference type="NCBI Taxonomy" id="9606"/>
</organismHost>
<reference key="1">
    <citation type="journal article" date="2000" name="Virology">
        <title>Virtually full-length subtype F and F/D recombinant HIV-1 from Africa and South America.</title>
        <authorList>
            <person name="Laukkanen T."/>
            <person name="Carr J.K."/>
            <person name="Janssens W."/>
            <person name="Liitsola K."/>
            <person name="Gotte D."/>
            <person name="McCutchan F.E."/>
            <person name="Op de Coul E."/>
            <person name="Cornelissen M."/>
            <person name="Heyndrickx L."/>
            <person name="van der Groen G."/>
            <person name="Salminen M.O."/>
        </authorList>
    </citation>
    <scope>NUCLEOTIDE SEQUENCE [GENOMIC DNA]</scope>
</reference>
<reference key="2">
    <citation type="journal article" date="2005" name="Microbes Infect.">
        <title>Decoding Tat: the biology of HIV Tat posttranslational modifications.</title>
        <authorList>
            <person name="Hetzer C."/>
            <person name="Dormeyer W."/>
            <person name="Schnolzer M."/>
            <person name="Ott M."/>
        </authorList>
    </citation>
    <scope>REVIEW</scope>
    <scope>ALTERNATIVE SPLICING</scope>
</reference>
<reference key="3">
    <citation type="journal article" date="2006" name="Front. Biosci.">
        <title>The multiple functions of HIV-1 Tat: proliferation versus apoptosis.</title>
        <authorList>
            <person name="Peruzzi F."/>
        </authorList>
    </citation>
    <scope>REVIEW</scope>
</reference>
<reference key="4">
    <citation type="journal article" date="2006" name="Microbes Infect.">
        <title>HIV tat and neurotoxicity.</title>
        <authorList>
            <person name="King J.E."/>
            <person name="Eugenin E.A."/>
            <person name="Buckner C.M."/>
            <person name="Berman J.W."/>
        </authorList>
    </citation>
    <scope>REVIEW</scope>
</reference>
<evidence type="ECO:0000255" key="1">
    <source>
        <dbReference type="HAMAP-Rule" id="MF_04079"/>
    </source>
</evidence>
<evidence type="ECO:0000256" key="2">
    <source>
        <dbReference type="SAM" id="MobiDB-lite"/>
    </source>
</evidence>
<evidence type="ECO:0000305" key="3"/>
<keyword id="KW-0007">Acetylation</keyword>
<keyword id="KW-0010">Activator</keyword>
<keyword id="KW-0014">AIDS</keyword>
<keyword id="KW-0025">Alternative splicing</keyword>
<keyword id="KW-0053">Apoptosis</keyword>
<keyword id="KW-1035">Host cytoplasm</keyword>
<keyword id="KW-1048">Host nucleus</keyword>
<keyword id="KW-0945">Host-virus interaction</keyword>
<keyword id="KW-1090">Inhibition of host innate immune response by virus</keyword>
<keyword id="KW-1114">Inhibition of host interferon signaling pathway by virus</keyword>
<keyword id="KW-0922">Interferon antiviral system evasion</keyword>
<keyword id="KW-1017">Isopeptide bond</keyword>
<keyword id="KW-0479">Metal-binding</keyword>
<keyword id="KW-0488">Methylation</keyword>
<keyword id="KW-1122">Modulation of host chromatin by virus</keyword>
<keyword id="KW-1126">Modulation of host PP1 activity by virus</keyword>
<keyword id="KW-0597">Phosphoprotein</keyword>
<keyword id="KW-1185">Reference proteome</keyword>
<keyword id="KW-0694">RNA-binding</keyword>
<keyword id="KW-0964">Secreted</keyword>
<keyword id="KW-0804">Transcription</keyword>
<keyword id="KW-0805">Transcription regulation</keyword>
<keyword id="KW-0832">Ubl conjugation</keyword>
<keyword id="KW-0899">Viral immunoevasion</keyword>
<keyword id="KW-0862">Zinc</keyword>